<organism>
    <name type="scientific">Thermus aquaticus</name>
    <dbReference type="NCBI Taxonomy" id="271"/>
    <lineage>
        <taxon>Bacteria</taxon>
        <taxon>Thermotogati</taxon>
        <taxon>Deinococcota</taxon>
        <taxon>Deinococci</taxon>
        <taxon>Thermales</taxon>
        <taxon>Thermaceae</taxon>
        <taxon>Thermus</taxon>
    </lineage>
</organism>
<comment type="function">
    <text evidence="1 2">A P subtype restriction enzyme that recognizes the double-stranded sequence 5'-TCGA-3' and cleaves after T-1.</text>
</comment>
<comment type="catalytic activity">
    <reaction>
        <text>Endonucleolytic cleavage of DNA to give specific double-stranded fragments with terminal 5'-phosphates.</text>
        <dbReference type="EC" id="3.1.21.4"/>
    </reaction>
</comment>
<comment type="PTM">
    <text evidence="1">Only 15% of purified enzyme (upon expression in E.coli) can be sequenced, suggesting the remainder has a blocked N-terminus.</text>
</comment>
<comment type="sequence caution" evidence="3">
    <conflict type="frameshift">
        <sequence resource="EMBL-CDS" id="CAA68552"/>
    </conflict>
</comment>
<feature type="initiator methionine" description="Removed" evidence="1">
    <location>
        <position position="1"/>
    </location>
</feature>
<feature type="chain" id="PRO_0000077369" description="Type II restriction enzyme TaqI">
    <location>
        <begin position="2"/>
        <end position="263"/>
    </location>
</feature>
<sequence>MASTQAQKALETFERFLASLDLESYQQKYRPIKTVEQDLPRELNPLPDLYEHYWKALEDNPSFLGFEEFFDHWWEKRLRPLDEFIRKYFWGCSYAFVRLGLEARLYRTAVSIWTQFHFCYRWNASCELPLEAAPELDAQGIDALIHTSGSSTGIQIKKETYRSEAKSENRFLRKQRGTALIEIPYTLQTPEELEEKAKRARVNGETYRLWAKVAHHLDRLENGFVIFRESYVKSIELFLQKNAPTLSGLIRWDRVAQEALTAP</sequence>
<dbReference type="EC" id="3.1.21.4"/>
<dbReference type="EMBL" id="M74796">
    <property type="protein sequence ID" value="AAA27505.1"/>
    <property type="molecule type" value="Genomic_DNA"/>
</dbReference>
<dbReference type="EMBL" id="Y00499">
    <property type="protein sequence ID" value="CAA68552.1"/>
    <property type="status" value="ALT_FRAME"/>
    <property type="molecule type" value="Genomic_DNA"/>
</dbReference>
<dbReference type="PIR" id="JN0258">
    <property type="entry name" value="JN0258"/>
</dbReference>
<dbReference type="PRO" id="PR:P14386"/>
<dbReference type="GO" id="GO:0003677">
    <property type="term" value="F:DNA binding"/>
    <property type="evidence" value="ECO:0007669"/>
    <property type="project" value="InterPro"/>
</dbReference>
<dbReference type="GO" id="GO:0009036">
    <property type="term" value="F:type II site-specific deoxyribonuclease activity"/>
    <property type="evidence" value="ECO:0007669"/>
    <property type="project" value="UniProtKB-EC"/>
</dbReference>
<dbReference type="GO" id="GO:0009307">
    <property type="term" value="P:DNA restriction-modification system"/>
    <property type="evidence" value="ECO:0007669"/>
    <property type="project" value="UniProtKB-KW"/>
</dbReference>
<dbReference type="InterPro" id="IPR019073">
    <property type="entry name" value="Restrct_endonuc_II_TaqI"/>
</dbReference>
<dbReference type="Pfam" id="PF09573">
    <property type="entry name" value="RE_TaqI"/>
    <property type="match status" value="1"/>
</dbReference>
<protein>
    <recommendedName>
        <fullName evidence="2">Type II restriction enzyme TaqI</fullName>
        <shortName>R.TaqI</shortName>
        <ecNumber>3.1.21.4</ecNumber>
    </recommendedName>
    <alternativeName>
        <fullName>Endonuclease TaqI</fullName>
    </alternativeName>
    <alternativeName>
        <fullName>Type-2 restriction enzyme TaqI</fullName>
    </alternativeName>
</protein>
<accession>P14386</accession>
<reference key="1">
    <citation type="journal article" date="1987" name="Nucleic Acids Res.">
        <title>Cloning, sequencing and expression of the Taq I restriction-modification system.</title>
        <authorList>
            <person name="Slatko B.E."/>
            <person name="Benner J.S."/>
            <person name="Moran L.S."/>
            <person name="Jager-Quinton T."/>
            <person name="Simcox T.G."/>
            <person name="van Cott E.M."/>
            <person name="Wilson G.G."/>
        </authorList>
    </citation>
    <scope>NUCLEOTIDE SEQUENCE [GENOMIC DNA]</scope>
    <scope>PROTEIN SEQUENCE OF 2-27</scope>
    <scope>PARTIALLY BLOCKED N-TERMINUS</scope>
    <scope>FUNCTION</scope>
    <source>
        <strain>ATCC 25104 / DSM 625 / JCM 10724 / NBRC 103206 / NCIMB 11243 / YT-1</strain>
    </source>
</reference>
<reference key="2">
    <citation type="journal article" date="1992" name="Gene">
        <title>The corrected nucleotide sequences of the TaqI restriction and modification enzymes reveal a thirteen-codon overlap.</title>
        <authorList>
            <person name="Barany F."/>
            <person name="Slatko B."/>
            <person name="Danzitz M."/>
            <person name="Cowburn D."/>
            <person name="Schildkraut I."/>
            <person name="Wilson G.G."/>
        </authorList>
    </citation>
    <scope>SEQUENCE REVISION</scope>
    <source>
        <strain>ATCC 25104 / DSM 625 / JCM 10724 / NBRC 103206 / NCIMB 11243 / YT-1</strain>
    </source>
</reference>
<reference key="3">
    <citation type="journal article" date="2003" name="Nucleic Acids Res.">
        <title>A nomenclature for restriction enzymes, DNA methyltransferases, homing endonucleases and their genes.</title>
        <authorList>
            <person name="Roberts R.J."/>
            <person name="Belfort M."/>
            <person name="Bestor T."/>
            <person name="Bhagwat A.S."/>
            <person name="Bickle T.A."/>
            <person name="Bitinaite J."/>
            <person name="Blumenthal R.M."/>
            <person name="Degtyarev S.K."/>
            <person name="Dryden D.T."/>
            <person name="Dybvig K."/>
            <person name="Firman K."/>
            <person name="Gromova E.S."/>
            <person name="Gumport R.I."/>
            <person name="Halford S.E."/>
            <person name="Hattman S."/>
            <person name="Heitman J."/>
            <person name="Hornby D.P."/>
            <person name="Janulaitis A."/>
            <person name="Jeltsch A."/>
            <person name="Josephsen J."/>
            <person name="Kiss A."/>
            <person name="Klaenhammer T.R."/>
            <person name="Kobayashi I."/>
            <person name="Kong H."/>
            <person name="Krueger D.H."/>
            <person name="Lacks S."/>
            <person name="Marinus M.G."/>
            <person name="Miyahara M."/>
            <person name="Morgan R.D."/>
            <person name="Murray N.E."/>
            <person name="Nagaraja V."/>
            <person name="Piekarowicz A."/>
            <person name="Pingoud A."/>
            <person name="Raleigh E."/>
            <person name="Rao D.N."/>
            <person name="Reich N."/>
            <person name="Repin V.E."/>
            <person name="Selker E.U."/>
            <person name="Shaw P.C."/>
            <person name="Stein D.C."/>
            <person name="Stoddard B.L."/>
            <person name="Szybalski W."/>
            <person name="Trautner T.A."/>
            <person name="Van Etten J.L."/>
            <person name="Vitor J.M."/>
            <person name="Wilson G.G."/>
            <person name="Xu S.Y."/>
        </authorList>
    </citation>
    <scope>NOMENCLATURE</scope>
    <scope>SUBTYPE</scope>
</reference>
<gene>
    <name type="primary">taqIR</name>
</gene>
<name>T2TA_THEAQ</name>
<evidence type="ECO:0000269" key="1">
    <source>
    </source>
</evidence>
<evidence type="ECO:0000303" key="2">
    <source>
    </source>
</evidence>
<evidence type="ECO:0000305" key="3"/>
<keyword id="KW-0903">Direct protein sequencing</keyword>
<keyword id="KW-0255">Endonuclease</keyword>
<keyword id="KW-0378">Hydrolase</keyword>
<keyword id="KW-0540">Nuclease</keyword>
<keyword id="KW-0680">Restriction system</keyword>
<proteinExistence type="evidence at protein level"/>